<gene>
    <name type="primary">atp25</name>
    <name type="ORF">NFIA_092040</name>
</gene>
<reference key="1">
    <citation type="journal article" date="2008" name="PLoS Genet.">
        <title>Genomic islands in the pathogenic filamentous fungus Aspergillus fumigatus.</title>
        <authorList>
            <person name="Fedorova N.D."/>
            <person name="Khaldi N."/>
            <person name="Joardar V.S."/>
            <person name="Maiti R."/>
            <person name="Amedeo P."/>
            <person name="Anderson M.J."/>
            <person name="Crabtree J."/>
            <person name="Silva J.C."/>
            <person name="Badger J.H."/>
            <person name="Albarraq A."/>
            <person name="Angiuoli S."/>
            <person name="Bussey H."/>
            <person name="Bowyer P."/>
            <person name="Cotty P.J."/>
            <person name="Dyer P.S."/>
            <person name="Egan A."/>
            <person name="Galens K."/>
            <person name="Fraser-Liggett C.M."/>
            <person name="Haas B.J."/>
            <person name="Inman J.M."/>
            <person name="Kent R."/>
            <person name="Lemieux S."/>
            <person name="Malavazi I."/>
            <person name="Orvis J."/>
            <person name="Roemer T."/>
            <person name="Ronning C.M."/>
            <person name="Sundaram J.P."/>
            <person name="Sutton G."/>
            <person name="Turner G."/>
            <person name="Venter J.C."/>
            <person name="White O.R."/>
            <person name="Whitty B.R."/>
            <person name="Youngman P."/>
            <person name="Wolfe K.H."/>
            <person name="Goldman G.H."/>
            <person name="Wortman J.R."/>
            <person name="Jiang B."/>
            <person name="Denning D.W."/>
            <person name="Nierman W.C."/>
        </authorList>
    </citation>
    <scope>NUCLEOTIDE SEQUENCE [LARGE SCALE GENOMIC DNA]</scope>
    <source>
        <strain>ATCC 1020 / DSM 3700 / CBS 544.65 / FGSC A1164 / JCM 1740 / NRRL 181 / WB 181</strain>
    </source>
</reference>
<keyword id="KW-0472">Membrane</keyword>
<keyword id="KW-0496">Mitochondrion</keyword>
<keyword id="KW-0999">Mitochondrion inner membrane</keyword>
<keyword id="KW-1185">Reference proteome</keyword>
<keyword id="KW-0809">Transit peptide</keyword>
<feature type="transit peptide" description="Mitochondrion" evidence="2">
    <location>
        <begin position="1"/>
        <end position="73"/>
    </location>
</feature>
<feature type="chain" id="PRO_0000404476" description="ATPase synthesis protein 25, mitochondrial">
    <location>
        <begin position="74"/>
        <end position="692"/>
    </location>
</feature>
<feature type="region of interest" description="Disordered" evidence="3">
    <location>
        <begin position="44"/>
        <end position="83"/>
    </location>
</feature>
<feature type="region of interest" description="Disordered" evidence="3">
    <location>
        <begin position="286"/>
        <end position="314"/>
    </location>
</feature>
<feature type="region of interest" description="Disordered" evidence="3">
    <location>
        <begin position="338"/>
        <end position="373"/>
    </location>
</feature>
<feature type="compositionally biased region" description="Polar residues" evidence="3">
    <location>
        <begin position="65"/>
        <end position="81"/>
    </location>
</feature>
<feature type="compositionally biased region" description="Basic and acidic residues" evidence="3">
    <location>
        <begin position="292"/>
        <end position="302"/>
    </location>
</feature>
<feature type="compositionally biased region" description="Acidic residues" evidence="3">
    <location>
        <begin position="347"/>
        <end position="357"/>
    </location>
</feature>
<sequence>MNRILSKGPRGLNGLLRACPSNFGRSFLCRSTYNVNSRTFWSAPRLRSEDSPSSSQPLKPDPNDGNGNTHRTTSTASSQHTPWYLQEETPIDESRQISSRDQIPELPENSPAILPVLLDYVFKDLGLDELRLLDLRGLETPPPIGANAIMIIGTARSVKHLNVSADRLCRWLRSTYKLTPYADGLLGRNELKIKLRRKARRARVASRAGTTVDEKDDGITTGWICVNAGVVENSPVGEQASRKVEGFGNIVGGTRVVVQMFTEEKRAEVDLEGLWLATIERDRRRRQVSIDTKSDAPHEEVRASTPVQNSSSDHVFGLHSRSSAILPLEQRRGLHSKCRLLGPQTEDNQDDGLDDGLDMSPDSNSTGTDHLAANRTCDKEVATDSLLEHLSGLPDDEALSELGAGQEDTDSTPFLRRFYDALSQMSAEEAAVAQVKLLCTAISRHHLGYSKESLWKAFTTCNYHTYFISDELGIEIVSAMLTALPARQGGPKATGVLPEADRELALRVLEHLSLRGTDILNMKVFHLLYKAASHPTNLSGEEVVKDVTGTTKDRPTSRVAKLIETLDIQFDPEEARKLMMSMFRNEDYDGFWKLWSKLPLNGSPRTSADYEMLFRLHAELGDERRARDCVSTWAPIMSREHPPIPLRGQVVQHIMYCILIAEPAIDRMATAGSTSNLALIWNDCKNNAPARG</sequence>
<evidence type="ECO:0000250" key="1"/>
<evidence type="ECO:0000255" key="2"/>
<evidence type="ECO:0000256" key="3">
    <source>
        <dbReference type="SAM" id="MobiDB-lite"/>
    </source>
</evidence>
<evidence type="ECO:0000305" key="4"/>
<dbReference type="EMBL" id="DS027696">
    <property type="protein sequence ID" value="EAW19244.1"/>
    <property type="molecule type" value="Genomic_DNA"/>
</dbReference>
<dbReference type="RefSeq" id="XP_001261141.1">
    <property type="nucleotide sequence ID" value="XM_001261140.1"/>
</dbReference>
<dbReference type="SMR" id="A1DIN7"/>
<dbReference type="STRING" id="331117.A1DIN7"/>
<dbReference type="EnsemblFungi" id="EAW19244">
    <property type="protein sequence ID" value="EAW19244"/>
    <property type="gene ID" value="NFIA_092040"/>
</dbReference>
<dbReference type="GeneID" id="4587699"/>
<dbReference type="KEGG" id="nfi:NFIA_092040"/>
<dbReference type="VEuPathDB" id="FungiDB:NFIA_092040"/>
<dbReference type="eggNOG" id="ENOG502S5IB">
    <property type="taxonomic scope" value="Eukaryota"/>
</dbReference>
<dbReference type="HOGENOM" id="CLU_016140_0_0_1"/>
<dbReference type="OMA" id="CLSSWVP"/>
<dbReference type="OrthoDB" id="107372at2759"/>
<dbReference type="Proteomes" id="UP000006702">
    <property type="component" value="Unassembled WGS sequence"/>
</dbReference>
<dbReference type="GO" id="GO:0005743">
    <property type="term" value="C:mitochondrial inner membrane"/>
    <property type="evidence" value="ECO:0007669"/>
    <property type="project" value="UniProtKB-SubCell"/>
</dbReference>
<dbReference type="GO" id="GO:0140053">
    <property type="term" value="P:mitochondrial gene expression"/>
    <property type="evidence" value="ECO:0007669"/>
    <property type="project" value="InterPro"/>
</dbReference>
<dbReference type="GO" id="GO:0048255">
    <property type="term" value="P:mRNA stabilization"/>
    <property type="evidence" value="ECO:0007669"/>
    <property type="project" value="TreeGrafter"/>
</dbReference>
<dbReference type="FunFam" id="3.30.460.10:FF:000044">
    <property type="entry name" value="ATPase synthesis protein 25, mitochondrial"/>
    <property type="match status" value="1"/>
</dbReference>
<dbReference type="Gene3D" id="3.30.460.10">
    <property type="entry name" value="Beta Polymerase, domain 2"/>
    <property type="match status" value="1"/>
</dbReference>
<dbReference type="InterPro" id="IPR040152">
    <property type="entry name" value="Atp25"/>
</dbReference>
<dbReference type="InterPro" id="IPR043519">
    <property type="entry name" value="NT_sf"/>
</dbReference>
<dbReference type="PANTHER" id="PTHR28087">
    <property type="entry name" value="ATPASE SYNTHESIS PROTEIN 25, MITOCHONDRIAL"/>
    <property type="match status" value="1"/>
</dbReference>
<dbReference type="PANTHER" id="PTHR28087:SF1">
    <property type="entry name" value="ATPASE SYNTHESIS PROTEIN 25, MITOCHONDRIAL"/>
    <property type="match status" value="1"/>
</dbReference>
<organism>
    <name type="scientific">Neosartorya fischeri (strain ATCC 1020 / DSM 3700 / CBS 544.65 / FGSC A1164 / JCM 1740 / NRRL 181 / WB 181)</name>
    <name type="common">Aspergillus fischerianus</name>
    <dbReference type="NCBI Taxonomy" id="331117"/>
    <lineage>
        <taxon>Eukaryota</taxon>
        <taxon>Fungi</taxon>
        <taxon>Dikarya</taxon>
        <taxon>Ascomycota</taxon>
        <taxon>Pezizomycotina</taxon>
        <taxon>Eurotiomycetes</taxon>
        <taxon>Eurotiomycetidae</taxon>
        <taxon>Eurotiales</taxon>
        <taxon>Aspergillaceae</taxon>
        <taxon>Aspergillus</taxon>
        <taxon>Aspergillus subgen. Fumigati</taxon>
    </lineage>
</organism>
<name>ATP25_NEOFI</name>
<comment type="function">
    <text evidence="1">Probable mitochondrial mRNA stabilization factor.</text>
</comment>
<comment type="subcellular location">
    <subcellularLocation>
        <location evidence="1">Mitochondrion inner membrane</location>
        <topology evidence="1">Peripheral membrane protein</topology>
        <orientation evidence="1">Matrix side</orientation>
    </subcellularLocation>
</comment>
<comment type="similarity">
    <text evidence="4">Belongs to the ATP25 family.</text>
</comment>
<accession>A1DIN7</accession>
<protein>
    <recommendedName>
        <fullName>ATPase synthesis protein 25, mitochondrial</fullName>
    </recommendedName>
</protein>
<proteinExistence type="inferred from homology"/>